<sequence length="218" mass="24245">MVKSNLQRILNSHCFAREKEGKKQCESSIMEALSSSITDRMASPTVCCSSTTGPGPLWCSDAPHPPLKIPGGRGNGARDHPSTTQTLYSDRKLTVTEEPAGPGRPQILHFQSRPAAARLIQWEAVLRGDGLFVEIPCEPFPDGSKESFISLLEFAEEHLKVVSVFVCFYKNREDRVKLVRTFSFLGFEMVKPGHALVPARPDVLFMAYNFDRDSSDED</sequence>
<reference key="1">
    <citation type="journal article" date="2000" name="Biochem. J.">
        <title>Two zebrafish (Danio rerio) antizymes with different expression and activities.</title>
        <authorList>
            <person name="Saito T."/>
            <person name="Hascilowicz T."/>
            <person name="Ohkido I."/>
            <person name="Kikuchi Y."/>
            <person name="Okamoto H."/>
            <person name="Hayashi S."/>
            <person name="Murakami Y."/>
            <person name="Matsufuji S."/>
        </authorList>
    </citation>
    <scope>NUCLEOTIDE SEQUENCE [MRNA]</scope>
    <scope>RIBOSOMAL FRAMESHIFT</scope>
    <scope>FUNCTION</scope>
    <scope>TISSUE SPECIFICITY</scope>
    <scope>DEVELOPMENTAL STAGE</scope>
    <source>
        <tissue>Embryo</tissue>
    </source>
</reference>
<reference key="2">
    <citation type="submission" date="2003-08" db="EMBL/GenBank/DDBJ databases">
        <authorList>
            <consortium name="NIH - Zebrafish Gene Collection (ZGC) project"/>
        </authorList>
    </citation>
    <scope>NUCLEOTIDE SEQUENCE [LARGE SCALE MRNA]</scope>
    <source>
        <strain>AB</strain>
    </source>
</reference>
<name>OAZ2_DANRE</name>
<protein>
    <recommendedName>
        <fullName>Ornithine decarboxylase antizyme 2</fullName>
    </recommendedName>
    <alternativeName>
        <fullName>ODC antizyme, long form</fullName>
        <shortName>ODC-Az-L</shortName>
    </alternativeName>
</protein>
<gene>
    <name type="primary">oaz1b</name>
    <name type="synonym">oaz2</name>
</gene>
<keyword id="KW-0620">Polyamine biosynthesis</keyword>
<keyword id="KW-1185">Reference proteome</keyword>
<keyword id="KW-0688">Ribosomal frameshifting</keyword>
<feature type="chain" id="PRO_0000220855" description="Ornithine decarboxylase antizyme 2">
    <location>
        <begin position="1"/>
        <end position="218"/>
    </location>
</feature>
<feature type="sequence conflict" description="In Ref. 2; AAH56833." evidence="3" ref="2">
    <original>P</original>
    <variation>L</variation>
    <location>
        <position position="44"/>
    </location>
</feature>
<organism>
    <name type="scientific">Danio rerio</name>
    <name type="common">Zebrafish</name>
    <name type="synonym">Brachydanio rerio</name>
    <dbReference type="NCBI Taxonomy" id="7955"/>
    <lineage>
        <taxon>Eukaryota</taxon>
        <taxon>Metazoa</taxon>
        <taxon>Chordata</taxon>
        <taxon>Craniata</taxon>
        <taxon>Vertebrata</taxon>
        <taxon>Euteleostomi</taxon>
        <taxon>Actinopterygii</taxon>
        <taxon>Neopterygii</taxon>
        <taxon>Teleostei</taxon>
        <taxon>Ostariophysi</taxon>
        <taxon>Cypriniformes</taxon>
        <taxon>Danionidae</taxon>
        <taxon>Danioninae</taxon>
        <taxon>Danio</taxon>
    </lineage>
</organism>
<accession>Q9YI97</accession>
<accession>Q6PGU0</accession>
<accession>Q9IBH4</accession>
<evidence type="ECO:0000250" key="1">
    <source>
        <dbReference type="UniProtKB" id="P54368"/>
    </source>
</evidence>
<evidence type="ECO:0000269" key="2">
    <source>
    </source>
</evidence>
<evidence type="ECO:0000305" key="3"/>
<dbReference type="EMBL" id="AB017118">
    <property type="protein sequence ID" value="BAA74771.1"/>
    <property type="molecule type" value="mRNA"/>
</dbReference>
<dbReference type="EMBL" id="AB017118">
    <property type="protein sequence ID" value="BAA74772.1"/>
    <property type="status" value="ALT_SEQ"/>
    <property type="molecule type" value="mRNA"/>
</dbReference>
<dbReference type="EMBL" id="BC056833">
    <property type="protein sequence ID" value="AAH56833.1"/>
    <property type="status" value="ALT_SEQ"/>
    <property type="molecule type" value="mRNA"/>
</dbReference>
<dbReference type="RefSeq" id="NP_919413.2">
    <property type="nucleotide sequence ID" value="NM_194432.3"/>
</dbReference>
<dbReference type="SMR" id="Q9YI97"/>
<dbReference type="FunCoup" id="Q9YI97">
    <property type="interactions" value="6"/>
</dbReference>
<dbReference type="STRING" id="7955.ENSDARP00000139123"/>
<dbReference type="GeneID" id="259193"/>
<dbReference type="KEGG" id="dre:259193"/>
<dbReference type="AGR" id="ZFIN:ZDB-GENE-020731-5"/>
<dbReference type="CTD" id="259193"/>
<dbReference type="ZFIN" id="ZDB-GENE-020731-5">
    <property type="gene designation" value="oaz1b"/>
</dbReference>
<dbReference type="InParanoid" id="Q9YI97"/>
<dbReference type="OrthoDB" id="5959761at2759"/>
<dbReference type="PhylomeDB" id="Q9YI97"/>
<dbReference type="PRO" id="PR:Q9YI97"/>
<dbReference type="Proteomes" id="UP000000437">
    <property type="component" value="Chromosome 21"/>
</dbReference>
<dbReference type="GO" id="GO:0005737">
    <property type="term" value="C:cytoplasm"/>
    <property type="evidence" value="ECO:0000318"/>
    <property type="project" value="GO_Central"/>
</dbReference>
<dbReference type="GO" id="GO:0005634">
    <property type="term" value="C:nucleus"/>
    <property type="evidence" value="ECO:0000318"/>
    <property type="project" value="GO_Central"/>
</dbReference>
<dbReference type="GO" id="GO:0008073">
    <property type="term" value="F:ornithine decarboxylase inhibitor activity"/>
    <property type="evidence" value="ECO:0000318"/>
    <property type="project" value="GO_Central"/>
</dbReference>
<dbReference type="GO" id="GO:0006596">
    <property type="term" value="P:polyamine biosynthetic process"/>
    <property type="evidence" value="ECO:0007669"/>
    <property type="project" value="UniProtKB-KW"/>
</dbReference>
<dbReference type="GO" id="GO:0090316">
    <property type="term" value="P:positive regulation of intracellular protein transport"/>
    <property type="evidence" value="ECO:0000250"/>
    <property type="project" value="UniProtKB"/>
</dbReference>
<dbReference type="GO" id="GO:0045732">
    <property type="term" value="P:positive regulation of protein catabolic process"/>
    <property type="evidence" value="ECO:0000318"/>
    <property type="project" value="GO_Central"/>
</dbReference>
<dbReference type="GO" id="GO:0075523">
    <property type="term" value="P:viral translational frameshifting"/>
    <property type="evidence" value="ECO:0007669"/>
    <property type="project" value="UniProtKB-KW"/>
</dbReference>
<dbReference type="FunFam" id="3.40.630.60:FF:000001">
    <property type="entry name" value="Ornithine decarboxylase antizyme 1"/>
    <property type="match status" value="1"/>
</dbReference>
<dbReference type="Gene3D" id="3.40.630.60">
    <property type="match status" value="1"/>
</dbReference>
<dbReference type="InterPro" id="IPR016181">
    <property type="entry name" value="Acyl_CoA_acyltransferase"/>
</dbReference>
<dbReference type="InterPro" id="IPR002993">
    <property type="entry name" value="ODC_AZ"/>
</dbReference>
<dbReference type="InterPro" id="IPR038581">
    <property type="entry name" value="ODC_AZ_sf"/>
</dbReference>
<dbReference type="PANTHER" id="PTHR10279">
    <property type="entry name" value="ORNITHINE DECARBOXYLASE ANTIZYME"/>
    <property type="match status" value="1"/>
</dbReference>
<dbReference type="PANTHER" id="PTHR10279:SF11">
    <property type="entry name" value="ORNITHINE DECARBOXYLASE ANTIZYME 2"/>
    <property type="match status" value="1"/>
</dbReference>
<dbReference type="Pfam" id="PF02100">
    <property type="entry name" value="ODC_AZ"/>
    <property type="match status" value="1"/>
</dbReference>
<dbReference type="SUPFAM" id="SSF55729">
    <property type="entry name" value="Acyl-CoA N-acyltransferases (Nat)"/>
    <property type="match status" value="1"/>
</dbReference>
<dbReference type="PROSITE" id="PS01337">
    <property type="entry name" value="ODC_AZ"/>
    <property type="match status" value="1"/>
</dbReference>
<proteinExistence type="evidence at transcript level"/>
<comment type="function">
    <text evidence="2">Ornithine decarboxylase (ODC) antizyme protein that negatively regulates ODC activity and intracellular polyamine biosynthesis and uptake in response to increased intracellular polyamine levels. Binds to ODC monomers, inhibiting the assembly of the functional ODC homodimers. Does not target the ODC monomers for degradation, which allows a protein synthesis-independent restoration of ODC activity.</text>
</comment>
<comment type="subunit">
    <text evidence="1">Interacts with ODC1 and thereby sterically blocks ODC homodimerization.</text>
</comment>
<comment type="alternative products">
    <event type="ribosomal frameshifting"/>
    <isoform>
        <id>Q9YI97-1</id>
        <name>1</name>
        <sequence type="displayed"/>
    </isoform>
    <text evidence="2">A ribosomal frameshift occurs between the codons for Ser-60 and Asp-61. An autoregulatory mechanism enables modulation of frameshifting according to the cellular concentration of polyamines.</text>
</comment>
<comment type="tissue specificity">
    <text evidence="2">Expressed ubiquitously in 24 hours embryos, with highest levels in telencephalon, lens, retina, cerebellum and hindbrain primordia.</text>
</comment>
<comment type="developmental stage">
    <text evidence="2">Expressed in both embryos and adults.</text>
</comment>
<comment type="similarity">
    <text evidence="3">Belongs to the ODC antizyme family.</text>
</comment>